<reference key="1">
    <citation type="journal article" date="2010" name="J. Bacteriol.">
        <title>Genome sequence of the Fleming strain of Micrococcus luteus, a simple free-living actinobacterium.</title>
        <authorList>
            <person name="Young M."/>
            <person name="Artsatbanov V."/>
            <person name="Beller H.R."/>
            <person name="Chandra G."/>
            <person name="Chater K.F."/>
            <person name="Dover L.G."/>
            <person name="Goh E.B."/>
            <person name="Kahan T."/>
            <person name="Kaprelyants A.S."/>
            <person name="Kyrpides N."/>
            <person name="Lapidus A."/>
            <person name="Lowry S.R."/>
            <person name="Lykidis A."/>
            <person name="Mahillon J."/>
            <person name="Markowitz V."/>
            <person name="Mavromatis K."/>
            <person name="Mukamolova G.V."/>
            <person name="Oren A."/>
            <person name="Rokem J.S."/>
            <person name="Smith M.C."/>
            <person name="Young D.I."/>
            <person name="Greenblatt C.L."/>
        </authorList>
    </citation>
    <scope>NUCLEOTIDE SEQUENCE [LARGE SCALE GENOMIC DNA]</scope>
    <source>
        <strain>ATCC 4698 / DSM 20030 / JCM 1464 / CCM 169 / CCUG 5858 / IAM 1056 / NBRC 3333 / NCIMB 9278 / NCTC 2665 / VKM Ac-2230</strain>
    </source>
</reference>
<dbReference type="EC" id="2.5.1.61" evidence="1"/>
<dbReference type="EMBL" id="CP001628">
    <property type="protein sequence ID" value="ACS31011.1"/>
    <property type="molecule type" value="Genomic_DNA"/>
</dbReference>
<dbReference type="RefSeq" id="WP_012751002.1">
    <property type="nucleotide sequence ID" value="NC_012803.1"/>
</dbReference>
<dbReference type="SMR" id="C5CB88"/>
<dbReference type="STRING" id="465515.Mlut_15190"/>
<dbReference type="EnsemblBacteria" id="ACS31011">
    <property type="protein sequence ID" value="ACS31011"/>
    <property type="gene ID" value="Mlut_15190"/>
</dbReference>
<dbReference type="GeneID" id="93343390"/>
<dbReference type="KEGG" id="mlu:Mlut_15190"/>
<dbReference type="PATRIC" id="fig|465515.4.peg.1455"/>
<dbReference type="eggNOG" id="COG0181">
    <property type="taxonomic scope" value="Bacteria"/>
</dbReference>
<dbReference type="HOGENOM" id="CLU_019704_1_0_11"/>
<dbReference type="UniPathway" id="UPA00251">
    <property type="reaction ID" value="UER00319"/>
</dbReference>
<dbReference type="Proteomes" id="UP000000738">
    <property type="component" value="Chromosome"/>
</dbReference>
<dbReference type="GO" id="GO:0005737">
    <property type="term" value="C:cytoplasm"/>
    <property type="evidence" value="ECO:0007669"/>
    <property type="project" value="TreeGrafter"/>
</dbReference>
<dbReference type="GO" id="GO:0004418">
    <property type="term" value="F:hydroxymethylbilane synthase activity"/>
    <property type="evidence" value="ECO:0007669"/>
    <property type="project" value="UniProtKB-UniRule"/>
</dbReference>
<dbReference type="GO" id="GO:0006782">
    <property type="term" value="P:protoporphyrinogen IX biosynthetic process"/>
    <property type="evidence" value="ECO:0007669"/>
    <property type="project" value="UniProtKB-UniRule"/>
</dbReference>
<dbReference type="FunFam" id="3.40.190.10:FF:000005">
    <property type="entry name" value="Porphobilinogen deaminase"/>
    <property type="match status" value="1"/>
</dbReference>
<dbReference type="Gene3D" id="3.40.190.10">
    <property type="entry name" value="Periplasmic binding protein-like II"/>
    <property type="match status" value="2"/>
</dbReference>
<dbReference type="Gene3D" id="3.30.160.40">
    <property type="entry name" value="Porphobilinogen deaminase, C-terminal domain"/>
    <property type="match status" value="1"/>
</dbReference>
<dbReference type="HAMAP" id="MF_00260">
    <property type="entry name" value="Porphobil_deam"/>
    <property type="match status" value="1"/>
</dbReference>
<dbReference type="InterPro" id="IPR000860">
    <property type="entry name" value="HemC"/>
</dbReference>
<dbReference type="InterPro" id="IPR022419">
    <property type="entry name" value="Porphobilin_deaminase_cofac_BS"/>
</dbReference>
<dbReference type="InterPro" id="IPR022417">
    <property type="entry name" value="Porphobilin_deaminase_N"/>
</dbReference>
<dbReference type="InterPro" id="IPR022418">
    <property type="entry name" value="Porphobilinogen_deaminase_C"/>
</dbReference>
<dbReference type="InterPro" id="IPR036803">
    <property type="entry name" value="Porphobilinogen_deaminase_C_sf"/>
</dbReference>
<dbReference type="NCBIfam" id="TIGR00212">
    <property type="entry name" value="hemC"/>
    <property type="match status" value="1"/>
</dbReference>
<dbReference type="PANTHER" id="PTHR11557">
    <property type="entry name" value="PORPHOBILINOGEN DEAMINASE"/>
    <property type="match status" value="1"/>
</dbReference>
<dbReference type="PANTHER" id="PTHR11557:SF0">
    <property type="entry name" value="PORPHOBILINOGEN DEAMINASE"/>
    <property type="match status" value="1"/>
</dbReference>
<dbReference type="Pfam" id="PF01379">
    <property type="entry name" value="Porphobil_deam"/>
    <property type="match status" value="1"/>
</dbReference>
<dbReference type="Pfam" id="PF03900">
    <property type="entry name" value="Porphobil_deamC"/>
    <property type="match status" value="1"/>
</dbReference>
<dbReference type="PIRSF" id="PIRSF001438">
    <property type="entry name" value="4pyrrol_synth_OHMeBilane_synth"/>
    <property type="match status" value="1"/>
</dbReference>
<dbReference type="PRINTS" id="PR00151">
    <property type="entry name" value="PORPHBDMNASE"/>
</dbReference>
<dbReference type="SUPFAM" id="SSF53850">
    <property type="entry name" value="Periplasmic binding protein-like II"/>
    <property type="match status" value="1"/>
</dbReference>
<dbReference type="SUPFAM" id="SSF54782">
    <property type="entry name" value="Porphobilinogen deaminase (hydroxymethylbilane synthase), C-terminal domain"/>
    <property type="match status" value="1"/>
</dbReference>
<dbReference type="PROSITE" id="PS00533">
    <property type="entry name" value="PORPHOBILINOGEN_DEAM"/>
    <property type="match status" value="1"/>
</dbReference>
<sequence>MSPLRIGTRGSALATTQTSHVAEALTARSGLAHELVVIRTEGDVTTGSLASLGGTGVFASALRAAVLDGVVDAAVHSLKDLPAAQPETLEIAAVPARADLRDALCARDGLTLATLPEGARVGTGSPRRVAQLKALRPDLELVDIRGNVQTRLARVPGLEQHDDHAPAAVGSPRGDLDAVILACAGLDRLGLDHVITERIDPEVMVPAPGQGALAMEIRAEDESFLGRALLDPEAPVGRLHAALELVDDRDTHVAVTAERALLRRLEAGCAAPIGAVARVGDGEAGAPRIEMTAMVAALDGSRVLRRTSSVQLDPVPADVVGDPAAADEWLEDTLFVAAEALGVHVAEQFVAEGADLLPGTVRGVDRGDGAPRPDDPA</sequence>
<feature type="chain" id="PRO_1000204657" description="Porphobilinogen deaminase">
    <location>
        <begin position="1"/>
        <end position="377"/>
    </location>
</feature>
<feature type="modified residue" description="S-(dipyrrolylmethanemethyl)cysteine" evidence="1">
    <location>
        <position position="269"/>
    </location>
</feature>
<proteinExistence type="inferred from homology"/>
<evidence type="ECO:0000255" key="1">
    <source>
        <dbReference type="HAMAP-Rule" id="MF_00260"/>
    </source>
</evidence>
<accession>C5CB88</accession>
<protein>
    <recommendedName>
        <fullName evidence="1">Porphobilinogen deaminase</fullName>
        <shortName evidence="1">PBG</shortName>
        <ecNumber evidence="1">2.5.1.61</ecNumber>
    </recommendedName>
    <alternativeName>
        <fullName evidence="1">Hydroxymethylbilane synthase</fullName>
        <shortName evidence="1">HMBS</shortName>
    </alternativeName>
    <alternativeName>
        <fullName evidence="1">Pre-uroporphyrinogen synthase</fullName>
    </alternativeName>
</protein>
<name>HEM3_MICLC</name>
<organism>
    <name type="scientific">Micrococcus luteus (strain ATCC 4698 / DSM 20030 / JCM 1464 / CCM 169 / CCUG 5858 / IAM 1056 / NBRC 3333 / NCIMB 9278 / NCTC 2665 / VKM Ac-2230)</name>
    <name type="common">Micrococcus lysodeikticus</name>
    <dbReference type="NCBI Taxonomy" id="465515"/>
    <lineage>
        <taxon>Bacteria</taxon>
        <taxon>Bacillati</taxon>
        <taxon>Actinomycetota</taxon>
        <taxon>Actinomycetes</taxon>
        <taxon>Micrococcales</taxon>
        <taxon>Micrococcaceae</taxon>
        <taxon>Micrococcus</taxon>
    </lineage>
</organism>
<keyword id="KW-0627">Porphyrin biosynthesis</keyword>
<keyword id="KW-1185">Reference proteome</keyword>
<keyword id="KW-0808">Transferase</keyword>
<comment type="function">
    <text evidence="1">Tetrapolymerization of the monopyrrole PBG into the hydroxymethylbilane pre-uroporphyrinogen in several discrete steps.</text>
</comment>
<comment type="catalytic activity">
    <reaction evidence="1">
        <text>4 porphobilinogen + H2O = hydroxymethylbilane + 4 NH4(+)</text>
        <dbReference type="Rhea" id="RHEA:13185"/>
        <dbReference type="ChEBI" id="CHEBI:15377"/>
        <dbReference type="ChEBI" id="CHEBI:28938"/>
        <dbReference type="ChEBI" id="CHEBI:57845"/>
        <dbReference type="ChEBI" id="CHEBI:58126"/>
        <dbReference type="EC" id="2.5.1.61"/>
    </reaction>
</comment>
<comment type="cofactor">
    <cofactor evidence="1">
        <name>dipyrromethane</name>
        <dbReference type="ChEBI" id="CHEBI:60342"/>
    </cofactor>
    <text evidence="1">Binds 1 dipyrromethane group covalently.</text>
</comment>
<comment type="pathway">
    <text evidence="1">Porphyrin-containing compound metabolism; protoporphyrin-IX biosynthesis; coproporphyrinogen-III from 5-aminolevulinate: step 2/4.</text>
</comment>
<comment type="subunit">
    <text evidence="1">Monomer.</text>
</comment>
<comment type="miscellaneous">
    <text evidence="1">The porphobilinogen subunits are added to the dipyrromethane group.</text>
</comment>
<comment type="similarity">
    <text evidence="1">Belongs to the HMBS family.</text>
</comment>
<gene>
    <name evidence="1" type="primary">hemC</name>
    <name type="ordered locus">Mlut_15190</name>
</gene>